<name>CMPR_SYNP6</name>
<keyword id="KW-0010">Activator</keyword>
<keyword id="KW-0963">Cytoplasm</keyword>
<keyword id="KW-0238">DNA-binding</keyword>
<keyword id="KW-0804">Transcription</keyword>
<keyword id="KW-0805">Transcription regulation</keyword>
<protein>
    <recommendedName>
        <fullName>HTH-type transcriptional activator CmpR</fullName>
    </recommendedName>
</protein>
<dbReference type="EMBL" id="AP008231">
    <property type="protein sequence ID" value="BAD78433.1"/>
    <property type="molecule type" value="Genomic_DNA"/>
</dbReference>
<dbReference type="RefSeq" id="WP_011242557.1">
    <property type="nucleotide sequence ID" value="NZ_CP085785.1"/>
</dbReference>
<dbReference type="SMR" id="Q5N5I5"/>
<dbReference type="GeneID" id="72430171"/>
<dbReference type="KEGG" id="syc:syc0243_c"/>
<dbReference type="eggNOG" id="COG0583">
    <property type="taxonomic scope" value="Bacteria"/>
</dbReference>
<dbReference type="Proteomes" id="UP000001175">
    <property type="component" value="Chromosome"/>
</dbReference>
<dbReference type="GO" id="GO:0005737">
    <property type="term" value="C:cytoplasm"/>
    <property type="evidence" value="ECO:0007669"/>
    <property type="project" value="UniProtKB-SubCell"/>
</dbReference>
<dbReference type="GO" id="GO:0003700">
    <property type="term" value="F:DNA-binding transcription factor activity"/>
    <property type="evidence" value="ECO:0007669"/>
    <property type="project" value="InterPro"/>
</dbReference>
<dbReference type="GO" id="GO:0000976">
    <property type="term" value="F:transcription cis-regulatory region binding"/>
    <property type="evidence" value="ECO:0007669"/>
    <property type="project" value="TreeGrafter"/>
</dbReference>
<dbReference type="CDD" id="cd08419">
    <property type="entry name" value="PBP2_CbbR_RubisCO_like"/>
    <property type="match status" value="1"/>
</dbReference>
<dbReference type="FunFam" id="1.10.10.10:FF:000001">
    <property type="entry name" value="LysR family transcriptional regulator"/>
    <property type="match status" value="1"/>
</dbReference>
<dbReference type="Gene3D" id="3.40.190.290">
    <property type="match status" value="1"/>
</dbReference>
<dbReference type="Gene3D" id="1.10.10.10">
    <property type="entry name" value="Winged helix-like DNA-binding domain superfamily/Winged helix DNA-binding domain"/>
    <property type="match status" value="1"/>
</dbReference>
<dbReference type="InterPro" id="IPR005119">
    <property type="entry name" value="LysR_subst-bd"/>
</dbReference>
<dbReference type="InterPro" id="IPR000847">
    <property type="entry name" value="Tscrpt_reg_HTH_LysR"/>
</dbReference>
<dbReference type="InterPro" id="IPR036388">
    <property type="entry name" value="WH-like_DNA-bd_sf"/>
</dbReference>
<dbReference type="InterPro" id="IPR036390">
    <property type="entry name" value="WH_DNA-bd_sf"/>
</dbReference>
<dbReference type="PANTHER" id="PTHR30126:SF5">
    <property type="entry name" value="HTH-TYPE TRANSCRIPTIONAL ACTIVATOR CMPR"/>
    <property type="match status" value="1"/>
</dbReference>
<dbReference type="PANTHER" id="PTHR30126">
    <property type="entry name" value="HTH-TYPE TRANSCRIPTIONAL REGULATOR"/>
    <property type="match status" value="1"/>
</dbReference>
<dbReference type="Pfam" id="PF00126">
    <property type="entry name" value="HTH_1"/>
    <property type="match status" value="1"/>
</dbReference>
<dbReference type="Pfam" id="PF03466">
    <property type="entry name" value="LysR_substrate"/>
    <property type="match status" value="1"/>
</dbReference>
<dbReference type="PRINTS" id="PR00039">
    <property type="entry name" value="HTHLYSR"/>
</dbReference>
<dbReference type="SUPFAM" id="SSF53850">
    <property type="entry name" value="Periplasmic binding protein-like II"/>
    <property type="match status" value="1"/>
</dbReference>
<dbReference type="SUPFAM" id="SSF46785">
    <property type="entry name" value="Winged helix' DNA-binding domain"/>
    <property type="match status" value="1"/>
</dbReference>
<dbReference type="PROSITE" id="PS50931">
    <property type="entry name" value="HTH_LYSR"/>
    <property type="match status" value="1"/>
</dbReference>
<comment type="function">
    <text evidence="1">Activates transcription of the cmpABCD operon under carbon dioxide-limited conditions.</text>
</comment>
<comment type="subcellular location">
    <subcellularLocation>
        <location evidence="4">Cytoplasm</location>
    </subcellularLocation>
</comment>
<comment type="similarity">
    <text evidence="4">Belongs to the LysR transcriptional regulatory family.</text>
</comment>
<sequence length="323" mass="35776">MKNLTLHQLKVFEAAARHSSFTRAAEELYLTQPTVSIQVKQLTKAVGLPLFEQIGKRLYLTEAGRQLYKTTRQVFEQLEQLDMTIADLQGMKQGQLRLAVITTAKYFIPRLIGPFCQRYPGINVSLKVTNHEGLINRINDNLDDLYVLSRPPSGFDITVQPFLDNPLVVVGPASHPLANQRGISLERLAQEPFILRERGSGTREATEQLFAAHNLNLNVKLDLGSNEAIKQAILGGLGLAVLSYHTLTSAGATPELKMFEVEGFPIHRQWHAVYPAGKQLSTVAATFLDYLLTESQRIAADIQIPESTTTDPELDAPQPVVGV</sequence>
<feature type="chain" id="PRO_0000341941" description="HTH-type transcriptional activator CmpR">
    <location>
        <begin position="1"/>
        <end position="323"/>
    </location>
</feature>
<feature type="domain" description="HTH lysR-type" evidence="2">
    <location>
        <begin position="4"/>
        <end position="61"/>
    </location>
</feature>
<feature type="DNA-binding region" description="H-T-H motif" evidence="2">
    <location>
        <begin position="21"/>
        <end position="40"/>
    </location>
</feature>
<feature type="region of interest" description="Disordered" evidence="3">
    <location>
        <begin position="304"/>
        <end position="323"/>
    </location>
</feature>
<reference key="1">
    <citation type="journal article" date="2007" name="Photosyn. Res.">
        <title>Complete nucleotide sequence of the freshwater unicellular cyanobacterium Synechococcus elongatus PCC 6301 chromosome: gene content and organization.</title>
        <authorList>
            <person name="Sugita C."/>
            <person name="Ogata K."/>
            <person name="Shikata M."/>
            <person name="Jikuya H."/>
            <person name="Takano J."/>
            <person name="Furumichi M."/>
            <person name="Kanehisa M."/>
            <person name="Omata T."/>
            <person name="Sugiura M."/>
            <person name="Sugita M."/>
        </authorList>
    </citation>
    <scope>NUCLEOTIDE SEQUENCE [LARGE SCALE GENOMIC DNA]</scope>
    <source>
        <strain>ATCC 27144 / PCC 6301 / SAUG 1402/1</strain>
    </source>
</reference>
<proteinExistence type="inferred from homology"/>
<gene>
    <name type="primary">cmpR</name>
    <name type="ordered locus">syc0243_c</name>
</gene>
<organism>
    <name type="scientific">Synechococcus sp. (strain ATCC 27144 / PCC 6301 / SAUG 1402/1)</name>
    <name type="common">Anacystis nidulans</name>
    <dbReference type="NCBI Taxonomy" id="269084"/>
    <lineage>
        <taxon>Bacteria</taxon>
        <taxon>Bacillati</taxon>
        <taxon>Cyanobacteriota</taxon>
        <taxon>Cyanophyceae</taxon>
        <taxon>Synechococcales</taxon>
        <taxon>Synechococcaceae</taxon>
        <taxon>Synechococcus</taxon>
    </lineage>
</organism>
<evidence type="ECO:0000250" key="1"/>
<evidence type="ECO:0000255" key="2">
    <source>
        <dbReference type="PROSITE-ProRule" id="PRU00253"/>
    </source>
</evidence>
<evidence type="ECO:0000256" key="3">
    <source>
        <dbReference type="SAM" id="MobiDB-lite"/>
    </source>
</evidence>
<evidence type="ECO:0000305" key="4"/>
<accession>Q5N5I5</accession>